<evidence type="ECO:0000250" key="1"/>
<evidence type="ECO:0000250" key="2">
    <source>
        <dbReference type="UniProtKB" id="P51888"/>
    </source>
</evidence>
<evidence type="ECO:0000255" key="3"/>
<evidence type="ECO:0000256" key="4">
    <source>
        <dbReference type="SAM" id="MobiDB-lite"/>
    </source>
</evidence>
<evidence type="ECO:0000269" key="5">
    <source>
    </source>
</evidence>
<evidence type="ECO:0000269" key="6">
    <source>
    </source>
</evidence>
<evidence type="ECO:0000305" key="7"/>
<gene>
    <name type="primary">PRELP</name>
</gene>
<reference key="1">
    <citation type="journal article" date="2000" name="J. Biol. Chem.">
        <title>The amino-terminal part of PRELP binds to heparin and heparan sulfate.</title>
        <authorList>
            <person name="Bengtsson E."/>
            <person name="Aspberg A."/>
            <person name="Heinegaard D."/>
            <person name="Sommarin Y."/>
            <person name="Spillmann D."/>
        </authorList>
    </citation>
    <scope>NUCLEOTIDE SEQUENCE [MRNA]</scope>
    <scope>GLYCOSYLATION</scope>
    <source>
        <tissue>Articular cartilage</tissue>
    </source>
</reference>
<reference key="2">
    <citation type="journal article" date="2002" name="J. Biol. Chem.">
        <title>The leucine-rich repeat protein PRELP binds perlecan and collagens and may function as a basement membrane anchor.</title>
        <authorList>
            <person name="Bengtsson E."/>
            <person name="Moergelin M."/>
            <person name="Sasaki T."/>
            <person name="Timpl R."/>
            <person name="Heinegaard D."/>
            <person name="Aspberg A."/>
        </authorList>
    </citation>
    <scope>FUNCTION</scope>
    <scope>INTERACTION WITH PERLECAN AND COLLAGEN</scope>
</reference>
<keyword id="KW-1015">Disulfide bond</keyword>
<keyword id="KW-0272">Extracellular matrix</keyword>
<keyword id="KW-0325">Glycoprotein</keyword>
<keyword id="KW-0357">Heparan sulfate</keyword>
<keyword id="KW-0358">Heparin-binding</keyword>
<keyword id="KW-0433">Leucine-rich repeat</keyword>
<keyword id="KW-0654">Proteoglycan</keyword>
<keyword id="KW-1185">Reference proteome</keyword>
<keyword id="KW-0677">Repeat</keyword>
<keyword id="KW-0964">Secreted</keyword>
<keyword id="KW-0732">Signal</keyword>
<name>PRELP_BOVIN</name>
<organism>
    <name type="scientific">Bos taurus</name>
    <name type="common">Bovine</name>
    <dbReference type="NCBI Taxonomy" id="9913"/>
    <lineage>
        <taxon>Eukaryota</taxon>
        <taxon>Metazoa</taxon>
        <taxon>Chordata</taxon>
        <taxon>Craniata</taxon>
        <taxon>Vertebrata</taxon>
        <taxon>Euteleostomi</taxon>
        <taxon>Mammalia</taxon>
        <taxon>Eutheria</taxon>
        <taxon>Laurasiatheria</taxon>
        <taxon>Artiodactyla</taxon>
        <taxon>Ruminantia</taxon>
        <taxon>Pecora</taxon>
        <taxon>Bovidae</taxon>
        <taxon>Bovinae</taxon>
        <taxon>Bos</taxon>
    </lineage>
</organism>
<feature type="signal peptide" evidence="3">
    <location>
        <begin position="1"/>
        <end position="21"/>
    </location>
</feature>
<feature type="chain" id="PRO_0000032743" description="Prolargin">
    <location>
        <begin position="22"/>
        <end position="381"/>
    </location>
</feature>
<feature type="repeat" description="LRR 1">
    <location>
        <begin position="94"/>
        <end position="113"/>
    </location>
</feature>
<feature type="repeat" description="LRR 2">
    <location>
        <begin position="114"/>
        <end position="137"/>
    </location>
</feature>
<feature type="repeat" description="LRR 3">
    <location>
        <begin position="138"/>
        <end position="161"/>
    </location>
</feature>
<feature type="repeat" description="LRR 4">
    <location>
        <begin position="162"/>
        <end position="182"/>
    </location>
</feature>
<feature type="repeat" description="LRR 5">
    <location>
        <begin position="183"/>
        <end position="206"/>
    </location>
</feature>
<feature type="repeat" description="LRR 6">
    <location>
        <begin position="207"/>
        <end position="232"/>
    </location>
</feature>
<feature type="repeat" description="LRR 7">
    <location>
        <begin position="233"/>
        <end position="253"/>
    </location>
</feature>
<feature type="repeat" description="LRR 8">
    <location>
        <begin position="254"/>
        <end position="277"/>
    </location>
</feature>
<feature type="repeat" description="LRR 9">
    <location>
        <begin position="278"/>
        <end position="302"/>
    </location>
</feature>
<feature type="repeat" description="LRR 10">
    <location>
        <begin position="303"/>
        <end position="322"/>
    </location>
</feature>
<feature type="repeat" description="LRR 11">
    <location>
        <begin position="323"/>
        <end position="361"/>
    </location>
</feature>
<feature type="repeat" description="LRR 12">
    <location>
        <begin position="362"/>
        <end position="381"/>
    </location>
</feature>
<feature type="region of interest" description="Disordered" evidence="4">
    <location>
        <begin position="19"/>
        <end position="65"/>
    </location>
</feature>
<feature type="compositionally biased region" description="Basic residues" evidence="4">
    <location>
        <begin position="25"/>
        <end position="39"/>
    </location>
</feature>
<feature type="compositionally biased region" description="Pro residues" evidence="4">
    <location>
        <begin position="56"/>
        <end position="65"/>
    </location>
</feature>
<feature type="glycosylation site" description="N-linked (GlcNAc...) asparagine" evidence="3">
    <location>
        <position position="123"/>
    </location>
</feature>
<feature type="glycosylation site" description="N-linked (GlcNAc...) asparagine" evidence="3">
    <location>
        <position position="288"/>
    </location>
</feature>
<feature type="glycosylation site" description="N-linked (GlcNAc...) asparagine" evidence="3">
    <location>
        <position position="319"/>
    </location>
</feature>
<feature type="glycosylation site" description="N-linked (GlcNAc...) asparagine" evidence="3">
    <location>
        <position position="326"/>
    </location>
</feature>
<feature type="disulfide bond" evidence="1">
    <location>
        <begin position="331"/>
        <end position="372"/>
    </location>
</feature>
<proteinExistence type="evidence at protein level"/>
<protein>
    <recommendedName>
        <fullName>Prolargin</fullName>
    </recommendedName>
    <alternativeName>
        <fullName>Proline-arginine-rich end leucine-rich repeat protein</fullName>
    </alternativeName>
</protein>
<comment type="function">
    <text evidence="6">May anchor basement membranes to the underlying connective tissue.</text>
</comment>
<comment type="subunit">
    <text evidence="6">Binds the basement membrane heparan sulfate proteoglycan perlecan and triple helical collagens type I and type II.</text>
</comment>
<comment type="subcellular location">
    <subcellularLocation>
        <location>Secreted</location>
        <location>Extracellular space</location>
        <location>Extracellular matrix</location>
    </subcellularLocation>
</comment>
<comment type="domain">
    <text evidence="2 6">The basic N-terminal Arg/Pro-rich region binds heparin and heparan sulfate (By similarity). Binds collagens type I and type II through its leucine-rich repeat domain (PubMed:11847210).</text>
</comment>
<comment type="PTM">
    <text evidence="5">Glycosylated; contains heparan sulfate.</text>
</comment>
<comment type="similarity">
    <text evidence="7">Belongs to the small leucine-rich proteoglycan (SLRP) family. SLRP class II subfamily.</text>
</comment>
<dbReference type="EMBL" id="AF163568">
    <property type="protein sequence ID" value="AAG23723.1"/>
    <property type="molecule type" value="mRNA"/>
</dbReference>
<dbReference type="RefSeq" id="NP_776859.1">
    <property type="nucleotide sequence ID" value="NM_174434.3"/>
</dbReference>
<dbReference type="SMR" id="Q9GKN8"/>
<dbReference type="FunCoup" id="Q9GKN8">
    <property type="interactions" value="517"/>
</dbReference>
<dbReference type="STRING" id="9913.ENSBTAP00000023709"/>
<dbReference type="GlyCosmos" id="Q9GKN8">
    <property type="glycosylation" value="4 sites, No reported glycans"/>
</dbReference>
<dbReference type="GlyGen" id="Q9GKN8">
    <property type="glycosylation" value="4 sites"/>
</dbReference>
<dbReference type="PaxDb" id="9913-ENSBTAP00000023709"/>
<dbReference type="PeptideAtlas" id="Q9GKN8"/>
<dbReference type="GeneID" id="282000"/>
<dbReference type="KEGG" id="bta:282000"/>
<dbReference type="CTD" id="5549"/>
<dbReference type="eggNOG" id="KOG0619">
    <property type="taxonomic scope" value="Eukaryota"/>
</dbReference>
<dbReference type="InParanoid" id="Q9GKN8"/>
<dbReference type="OrthoDB" id="5789657at2759"/>
<dbReference type="Proteomes" id="UP000009136">
    <property type="component" value="Unplaced"/>
</dbReference>
<dbReference type="GO" id="GO:0005615">
    <property type="term" value="C:extracellular space"/>
    <property type="evidence" value="ECO:0000318"/>
    <property type="project" value="GO_Central"/>
</dbReference>
<dbReference type="GO" id="GO:0008201">
    <property type="term" value="F:heparin binding"/>
    <property type="evidence" value="ECO:0000318"/>
    <property type="project" value="GO_Central"/>
</dbReference>
<dbReference type="FunFam" id="3.80.10.10:FF:000092">
    <property type="entry name" value="keratocan isoform X1"/>
    <property type="match status" value="1"/>
</dbReference>
<dbReference type="FunFam" id="3.80.10.10:FF:000133">
    <property type="entry name" value="prolargin"/>
    <property type="match status" value="1"/>
</dbReference>
<dbReference type="Gene3D" id="3.80.10.10">
    <property type="entry name" value="Ribonuclease Inhibitor"/>
    <property type="match status" value="2"/>
</dbReference>
<dbReference type="InterPro" id="IPR001611">
    <property type="entry name" value="Leu-rich_rpt"/>
</dbReference>
<dbReference type="InterPro" id="IPR025875">
    <property type="entry name" value="Leu-rich_rpt_4"/>
</dbReference>
<dbReference type="InterPro" id="IPR003591">
    <property type="entry name" value="Leu-rich_rpt_typical-subtyp"/>
</dbReference>
<dbReference type="InterPro" id="IPR032675">
    <property type="entry name" value="LRR_dom_sf"/>
</dbReference>
<dbReference type="InterPro" id="IPR000372">
    <property type="entry name" value="LRRNT"/>
</dbReference>
<dbReference type="InterPro" id="IPR050333">
    <property type="entry name" value="SLRP"/>
</dbReference>
<dbReference type="PANTHER" id="PTHR45712">
    <property type="entry name" value="AGAP008170-PA"/>
    <property type="match status" value="1"/>
</dbReference>
<dbReference type="PANTHER" id="PTHR45712:SF8">
    <property type="entry name" value="PROLARGIN"/>
    <property type="match status" value="1"/>
</dbReference>
<dbReference type="Pfam" id="PF12799">
    <property type="entry name" value="LRR_4"/>
    <property type="match status" value="1"/>
</dbReference>
<dbReference type="Pfam" id="PF13855">
    <property type="entry name" value="LRR_8"/>
    <property type="match status" value="2"/>
</dbReference>
<dbReference type="SMART" id="SM00364">
    <property type="entry name" value="LRR_BAC"/>
    <property type="match status" value="5"/>
</dbReference>
<dbReference type="SMART" id="SM00369">
    <property type="entry name" value="LRR_TYP"/>
    <property type="match status" value="8"/>
</dbReference>
<dbReference type="SMART" id="SM00013">
    <property type="entry name" value="LRRNT"/>
    <property type="match status" value="1"/>
</dbReference>
<dbReference type="SUPFAM" id="SSF52058">
    <property type="entry name" value="L domain-like"/>
    <property type="match status" value="1"/>
</dbReference>
<dbReference type="PROSITE" id="PS51450">
    <property type="entry name" value="LRR"/>
    <property type="match status" value="11"/>
</dbReference>
<accession>Q9GKN8</accession>
<sequence length="381" mass="43683">MRSSLCWLLTLLLILATAAQGQPTRRPRPRPRPRPRPRLRPTPSFPQPDEPTEPTDLPPPLPPGPPSVFPDCPRECYCPPDFPSALYCDSRNLRKVPVIPSRIHYLYLQNNFITELPVESFKNATGLRWINLDNNRIRKVDQRVLEKLPSLVFLYLEKNQLEEVPAALPRNLEQLRLSQNQISRIPPGVFSKLENLLLLDLQHNKLSDGVFKPDTFQGLKNLMQLNLAHNTLRKMPPKVPSAIHQLYLDSNRIEAIPSGYFKGFPNLAFIRLNYNQLSDRGLPKNSFNISNLLVLHLSHNRISSVPAISSRLEHLYLNNNSIEKINGTQICPNNIVAFHDFSSDLEHVPHLRYLRLDGNYLKPPIPLDLMMCFRLLQSVVI</sequence>